<name>RL35_YERPY</name>
<keyword id="KW-0687">Ribonucleoprotein</keyword>
<keyword id="KW-0689">Ribosomal protein</keyword>
<feature type="chain" id="PRO_1000127433" description="Large ribosomal subunit protein bL35">
    <location>
        <begin position="1"/>
        <end position="65"/>
    </location>
</feature>
<organism>
    <name type="scientific">Yersinia pseudotuberculosis serotype O:3 (strain YPIII)</name>
    <dbReference type="NCBI Taxonomy" id="502800"/>
    <lineage>
        <taxon>Bacteria</taxon>
        <taxon>Pseudomonadati</taxon>
        <taxon>Pseudomonadota</taxon>
        <taxon>Gammaproteobacteria</taxon>
        <taxon>Enterobacterales</taxon>
        <taxon>Yersiniaceae</taxon>
        <taxon>Yersinia</taxon>
    </lineage>
</organism>
<reference key="1">
    <citation type="submission" date="2008-02" db="EMBL/GenBank/DDBJ databases">
        <title>Complete sequence of Yersinia pseudotuberculosis YPIII.</title>
        <authorList>
            <consortium name="US DOE Joint Genome Institute"/>
            <person name="Copeland A."/>
            <person name="Lucas S."/>
            <person name="Lapidus A."/>
            <person name="Glavina del Rio T."/>
            <person name="Dalin E."/>
            <person name="Tice H."/>
            <person name="Bruce D."/>
            <person name="Goodwin L."/>
            <person name="Pitluck S."/>
            <person name="Munk A.C."/>
            <person name="Brettin T."/>
            <person name="Detter J.C."/>
            <person name="Han C."/>
            <person name="Tapia R."/>
            <person name="Schmutz J."/>
            <person name="Larimer F."/>
            <person name="Land M."/>
            <person name="Hauser L."/>
            <person name="Challacombe J.F."/>
            <person name="Green L."/>
            <person name="Lindler L.E."/>
            <person name="Nikolich M.P."/>
            <person name="Richardson P."/>
        </authorList>
    </citation>
    <scope>NUCLEOTIDE SEQUENCE [LARGE SCALE GENOMIC DNA]</scope>
    <source>
        <strain>YPIII</strain>
    </source>
</reference>
<comment type="similarity">
    <text evidence="1">Belongs to the bacterial ribosomal protein bL35 family.</text>
</comment>
<gene>
    <name evidence="1" type="primary">rpmI</name>
    <name type="ordered locus">YPK_1822</name>
</gene>
<protein>
    <recommendedName>
        <fullName evidence="1">Large ribosomal subunit protein bL35</fullName>
    </recommendedName>
    <alternativeName>
        <fullName evidence="2">50S ribosomal protein L35</fullName>
    </alternativeName>
</protein>
<accession>B1JJ19</accession>
<evidence type="ECO:0000255" key="1">
    <source>
        <dbReference type="HAMAP-Rule" id="MF_00514"/>
    </source>
</evidence>
<evidence type="ECO:0000305" key="2"/>
<proteinExistence type="inferred from homology"/>
<sequence>MPKIKTVRGAAKRFKKTANGGFKRKHANLRHILTKKATKRKRHLRPKGLVSKNDLGLVVACLPYA</sequence>
<dbReference type="EMBL" id="CP000950">
    <property type="protein sequence ID" value="ACA68113.1"/>
    <property type="molecule type" value="Genomic_DNA"/>
</dbReference>
<dbReference type="RefSeq" id="WP_002211834.1">
    <property type="nucleotide sequence ID" value="NZ_CP009792.1"/>
</dbReference>
<dbReference type="SMR" id="B1JJ19"/>
<dbReference type="GeneID" id="97456073"/>
<dbReference type="KEGG" id="ypy:YPK_1822"/>
<dbReference type="PATRIC" id="fig|502800.11.peg.2490"/>
<dbReference type="GO" id="GO:0022625">
    <property type="term" value="C:cytosolic large ribosomal subunit"/>
    <property type="evidence" value="ECO:0007669"/>
    <property type="project" value="TreeGrafter"/>
</dbReference>
<dbReference type="GO" id="GO:0003735">
    <property type="term" value="F:structural constituent of ribosome"/>
    <property type="evidence" value="ECO:0007669"/>
    <property type="project" value="InterPro"/>
</dbReference>
<dbReference type="GO" id="GO:0006412">
    <property type="term" value="P:translation"/>
    <property type="evidence" value="ECO:0007669"/>
    <property type="project" value="UniProtKB-UniRule"/>
</dbReference>
<dbReference type="FunFam" id="4.10.410.60:FF:000001">
    <property type="entry name" value="50S ribosomal protein L35"/>
    <property type="match status" value="1"/>
</dbReference>
<dbReference type="Gene3D" id="4.10.410.60">
    <property type="match status" value="1"/>
</dbReference>
<dbReference type="HAMAP" id="MF_00514">
    <property type="entry name" value="Ribosomal_bL35"/>
    <property type="match status" value="1"/>
</dbReference>
<dbReference type="InterPro" id="IPR001706">
    <property type="entry name" value="Ribosomal_bL35"/>
</dbReference>
<dbReference type="InterPro" id="IPR021137">
    <property type="entry name" value="Ribosomal_bL35-like"/>
</dbReference>
<dbReference type="InterPro" id="IPR018265">
    <property type="entry name" value="Ribosomal_bL35_CS"/>
</dbReference>
<dbReference type="InterPro" id="IPR037229">
    <property type="entry name" value="Ribosomal_bL35_sf"/>
</dbReference>
<dbReference type="NCBIfam" id="TIGR00001">
    <property type="entry name" value="rpmI_bact"/>
    <property type="match status" value="1"/>
</dbReference>
<dbReference type="PANTHER" id="PTHR33343">
    <property type="entry name" value="54S RIBOSOMAL PROTEIN BL35M"/>
    <property type="match status" value="1"/>
</dbReference>
<dbReference type="PANTHER" id="PTHR33343:SF1">
    <property type="entry name" value="LARGE RIBOSOMAL SUBUNIT PROTEIN BL35M"/>
    <property type="match status" value="1"/>
</dbReference>
<dbReference type="Pfam" id="PF01632">
    <property type="entry name" value="Ribosomal_L35p"/>
    <property type="match status" value="1"/>
</dbReference>
<dbReference type="PRINTS" id="PR00064">
    <property type="entry name" value="RIBOSOMALL35"/>
</dbReference>
<dbReference type="SUPFAM" id="SSF143034">
    <property type="entry name" value="L35p-like"/>
    <property type="match status" value="1"/>
</dbReference>
<dbReference type="PROSITE" id="PS00936">
    <property type="entry name" value="RIBOSOMAL_L35"/>
    <property type="match status" value="1"/>
</dbReference>